<organism>
    <name type="scientific">Geotalea uraniireducens (strain Rf4)</name>
    <name type="common">Geobacter uraniireducens</name>
    <dbReference type="NCBI Taxonomy" id="351605"/>
    <lineage>
        <taxon>Bacteria</taxon>
        <taxon>Pseudomonadati</taxon>
        <taxon>Thermodesulfobacteriota</taxon>
        <taxon>Desulfuromonadia</taxon>
        <taxon>Geobacterales</taxon>
        <taxon>Geobacteraceae</taxon>
        <taxon>Geotalea</taxon>
    </lineage>
</organism>
<comment type="function">
    <text evidence="1">Catalyzes the formation of 6,7-dimethyl-8-ribityllumazine by condensation of 5-amino-6-(D-ribitylamino)uracil with 3,4-dihydroxy-2-butanone 4-phosphate. This is the penultimate step in the biosynthesis of riboflavin.</text>
</comment>
<comment type="catalytic activity">
    <reaction evidence="1">
        <text>(2S)-2-hydroxy-3-oxobutyl phosphate + 5-amino-6-(D-ribitylamino)uracil = 6,7-dimethyl-8-(1-D-ribityl)lumazine + phosphate + 2 H2O + H(+)</text>
        <dbReference type="Rhea" id="RHEA:26152"/>
        <dbReference type="ChEBI" id="CHEBI:15377"/>
        <dbReference type="ChEBI" id="CHEBI:15378"/>
        <dbReference type="ChEBI" id="CHEBI:15934"/>
        <dbReference type="ChEBI" id="CHEBI:43474"/>
        <dbReference type="ChEBI" id="CHEBI:58201"/>
        <dbReference type="ChEBI" id="CHEBI:58830"/>
        <dbReference type="EC" id="2.5.1.78"/>
    </reaction>
</comment>
<comment type="pathway">
    <text evidence="1">Cofactor biosynthesis; riboflavin biosynthesis; riboflavin from 2-hydroxy-3-oxobutyl phosphate and 5-amino-6-(D-ribitylamino)uracil: step 1/2.</text>
</comment>
<comment type="similarity">
    <text evidence="1">Belongs to the DMRL synthase family.</text>
</comment>
<evidence type="ECO:0000255" key="1">
    <source>
        <dbReference type="HAMAP-Rule" id="MF_00178"/>
    </source>
</evidence>
<gene>
    <name evidence="1" type="primary">ribH</name>
    <name type="ordered locus">Gura_2180</name>
</gene>
<dbReference type="EC" id="2.5.1.78" evidence="1"/>
<dbReference type="EMBL" id="CP000698">
    <property type="protein sequence ID" value="ABQ26367.1"/>
    <property type="molecule type" value="Genomic_DNA"/>
</dbReference>
<dbReference type="RefSeq" id="WP_011939066.1">
    <property type="nucleotide sequence ID" value="NC_009483.1"/>
</dbReference>
<dbReference type="SMR" id="A5G3J9"/>
<dbReference type="STRING" id="351605.Gura_2180"/>
<dbReference type="KEGG" id="gur:Gura_2180"/>
<dbReference type="HOGENOM" id="CLU_089358_1_1_7"/>
<dbReference type="OrthoDB" id="9809709at2"/>
<dbReference type="UniPathway" id="UPA00275">
    <property type="reaction ID" value="UER00404"/>
</dbReference>
<dbReference type="Proteomes" id="UP000006695">
    <property type="component" value="Chromosome"/>
</dbReference>
<dbReference type="GO" id="GO:0005829">
    <property type="term" value="C:cytosol"/>
    <property type="evidence" value="ECO:0007669"/>
    <property type="project" value="TreeGrafter"/>
</dbReference>
<dbReference type="GO" id="GO:0009349">
    <property type="term" value="C:riboflavin synthase complex"/>
    <property type="evidence" value="ECO:0007669"/>
    <property type="project" value="InterPro"/>
</dbReference>
<dbReference type="GO" id="GO:0000906">
    <property type="term" value="F:6,7-dimethyl-8-ribityllumazine synthase activity"/>
    <property type="evidence" value="ECO:0007669"/>
    <property type="project" value="UniProtKB-UniRule"/>
</dbReference>
<dbReference type="GO" id="GO:0009231">
    <property type="term" value="P:riboflavin biosynthetic process"/>
    <property type="evidence" value="ECO:0007669"/>
    <property type="project" value="UniProtKB-UniRule"/>
</dbReference>
<dbReference type="CDD" id="cd09209">
    <property type="entry name" value="Lumazine_synthase-I"/>
    <property type="match status" value="1"/>
</dbReference>
<dbReference type="FunFam" id="3.40.50.960:FF:000001">
    <property type="entry name" value="6,7-dimethyl-8-ribityllumazine synthase"/>
    <property type="match status" value="1"/>
</dbReference>
<dbReference type="Gene3D" id="3.40.50.960">
    <property type="entry name" value="Lumazine/riboflavin synthase"/>
    <property type="match status" value="1"/>
</dbReference>
<dbReference type="HAMAP" id="MF_00178">
    <property type="entry name" value="Lumazine_synth"/>
    <property type="match status" value="1"/>
</dbReference>
<dbReference type="InterPro" id="IPR034964">
    <property type="entry name" value="LS"/>
</dbReference>
<dbReference type="InterPro" id="IPR002180">
    <property type="entry name" value="LS/RS"/>
</dbReference>
<dbReference type="InterPro" id="IPR036467">
    <property type="entry name" value="LS/RS_sf"/>
</dbReference>
<dbReference type="NCBIfam" id="TIGR00114">
    <property type="entry name" value="lumazine-synth"/>
    <property type="match status" value="1"/>
</dbReference>
<dbReference type="NCBIfam" id="NF000812">
    <property type="entry name" value="PRK00061.1-4"/>
    <property type="match status" value="1"/>
</dbReference>
<dbReference type="PANTHER" id="PTHR21058:SF0">
    <property type="entry name" value="6,7-DIMETHYL-8-RIBITYLLUMAZINE SYNTHASE"/>
    <property type="match status" value="1"/>
</dbReference>
<dbReference type="PANTHER" id="PTHR21058">
    <property type="entry name" value="6,7-DIMETHYL-8-RIBITYLLUMAZINE SYNTHASE DMRL SYNTHASE LUMAZINE SYNTHASE"/>
    <property type="match status" value="1"/>
</dbReference>
<dbReference type="Pfam" id="PF00885">
    <property type="entry name" value="DMRL_synthase"/>
    <property type="match status" value="1"/>
</dbReference>
<dbReference type="SUPFAM" id="SSF52121">
    <property type="entry name" value="Lumazine synthase"/>
    <property type="match status" value="1"/>
</dbReference>
<protein>
    <recommendedName>
        <fullName evidence="1">6,7-dimethyl-8-ribityllumazine synthase</fullName>
        <shortName evidence="1">DMRL synthase</shortName>
        <shortName evidence="1">LS</shortName>
        <shortName evidence="1">Lumazine synthase</shortName>
        <ecNumber evidence="1">2.5.1.78</ecNumber>
    </recommendedName>
</protein>
<keyword id="KW-1185">Reference proteome</keyword>
<keyword id="KW-0686">Riboflavin biosynthesis</keyword>
<keyword id="KW-0808">Transferase</keyword>
<reference key="1">
    <citation type="submission" date="2007-05" db="EMBL/GenBank/DDBJ databases">
        <title>Complete sequence of Geobacter uraniireducens Rf4.</title>
        <authorList>
            <consortium name="US DOE Joint Genome Institute"/>
            <person name="Copeland A."/>
            <person name="Lucas S."/>
            <person name="Lapidus A."/>
            <person name="Barry K."/>
            <person name="Detter J.C."/>
            <person name="Glavina del Rio T."/>
            <person name="Hammon N."/>
            <person name="Israni S."/>
            <person name="Dalin E."/>
            <person name="Tice H."/>
            <person name="Pitluck S."/>
            <person name="Chertkov O."/>
            <person name="Brettin T."/>
            <person name="Bruce D."/>
            <person name="Han C."/>
            <person name="Schmutz J."/>
            <person name="Larimer F."/>
            <person name="Land M."/>
            <person name="Hauser L."/>
            <person name="Kyrpides N."/>
            <person name="Mikhailova N."/>
            <person name="Shelobolina E."/>
            <person name="Aklujkar M."/>
            <person name="Lovley D."/>
            <person name="Richardson P."/>
        </authorList>
    </citation>
    <scope>NUCLEOTIDE SEQUENCE [LARGE SCALE GENOMIC DNA]</scope>
    <source>
        <strain>ATCC BAA-1134 / JCM 13001 / Rf4</strain>
    </source>
</reference>
<feature type="chain" id="PRO_1000077235" description="6,7-dimethyl-8-ribityllumazine synthase">
    <location>
        <begin position="1"/>
        <end position="155"/>
    </location>
</feature>
<feature type="active site" description="Proton donor" evidence="1">
    <location>
        <position position="89"/>
    </location>
</feature>
<feature type="binding site" evidence="1">
    <location>
        <position position="23"/>
    </location>
    <ligand>
        <name>5-amino-6-(D-ribitylamino)uracil</name>
        <dbReference type="ChEBI" id="CHEBI:15934"/>
    </ligand>
</feature>
<feature type="binding site" evidence="1">
    <location>
        <begin position="57"/>
        <end position="59"/>
    </location>
    <ligand>
        <name>5-amino-6-(D-ribitylamino)uracil</name>
        <dbReference type="ChEBI" id="CHEBI:15934"/>
    </ligand>
</feature>
<feature type="binding site" evidence="1">
    <location>
        <begin position="81"/>
        <end position="83"/>
    </location>
    <ligand>
        <name>5-amino-6-(D-ribitylamino)uracil</name>
        <dbReference type="ChEBI" id="CHEBI:15934"/>
    </ligand>
</feature>
<feature type="binding site" evidence="1">
    <location>
        <begin position="86"/>
        <end position="87"/>
    </location>
    <ligand>
        <name>(2S)-2-hydroxy-3-oxobutyl phosphate</name>
        <dbReference type="ChEBI" id="CHEBI:58830"/>
    </ligand>
</feature>
<feature type="binding site" evidence="1">
    <location>
        <position position="114"/>
    </location>
    <ligand>
        <name>5-amino-6-(D-ribitylamino)uracil</name>
        <dbReference type="ChEBI" id="CHEBI:15934"/>
    </ligand>
</feature>
<feature type="binding site" evidence="1">
    <location>
        <position position="128"/>
    </location>
    <ligand>
        <name>(2S)-2-hydroxy-3-oxobutyl phosphate</name>
        <dbReference type="ChEBI" id="CHEBI:58830"/>
    </ligand>
</feature>
<proteinExistence type="inferred from homology"/>
<name>RISB_GEOUR</name>
<accession>A5G3J9</accession>
<sequence length="155" mass="16316">MPKFIEGKLDAKGLRFGIVVGRFNSFISERLLEGALDALIRHGADDKNIDVARVPGAFEIPLATKKMAATGRYDAIICLGAVIRGATPHFDYVAAEVSKGVAHVSLDSGVPVAFGVLTTDTIEQAVERAGTKAGNKGFDSAVTAIETANLFKGIK</sequence>